<feature type="chain" id="PRO_0000152260" description="Putative arsenical pump-driving ATPase 1">
    <location>
        <begin position="1"/>
        <end position="396"/>
    </location>
</feature>
<feature type="binding site" evidence="2">
    <location>
        <begin position="8"/>
        <end position="15"/>
    </location>
    <ligand>
        <name>ATP</name>
        <dbReference type="ChEBI" id="CHEBI:30616"/>
    </ligand>
</feature>
<protein>
    <recommendedName>
        <fullName>Putative arsenical pump-driving ATPase 1</fullName>
        <ecNumber>7.3.2.7</ecNumber>
    </recommendedName>
    <alternativeName>
        <fullName>Arsenical resistance ATPase 1</fullName>
    </alternativeName>
    <alternativeName>
        <fullName>Arsenite-translocating ATPase 1</fullName>
    </alternativeName>
    <alternativeName>
        <fullName>Arsenite-transporting ATPase 1</fullName>
    </alternativeName>
</protein>
<accession>O66908</accession>
<reference key="1">
    <citation type="journal article" date="1998" name="Nature">
        <title>The complete genome of the hyperthermophilic bacterium Aquifex aeolicus.</title>
        <authorList>
            <person name="Deckert G."/>
            <person name="Warren P.V."/>
            <person name="Gaasterland T."/>
            <person name="Young W.G."/>
            <person name="Lenox A.L."/>
            <person name="Graham D.E."/>
            <person name="Overbeek R."/>
            <person name="Snead M.A."/>
            <person name="Keller M."/>
            <person name="Aujay M."/>
            <person name="Huber R."/>
            <person name="Feldman R.A."/>
            <person name="Short J.M."/>
            <person name="Olsen G.J."/>
            <person name="Swanson R.V."/>
        </authorList>
    </citation>
    <scope>NUCLEOTIDE SEQUENCE [LARGE SCALE GENOMIC DNA]</scope>
    <source>
        <strain>VF5</strain>
    </source>
</reference>
<comment type="function">
    <text evidence="1">Anion-transporting ATPase. Catalyzes the extrusion of arsenite (By similarity).</text>
</comment>
<comment type="catalytic activity">
    <reaction>
        <text>arsenite(in) + ATP + H2O = arsenite(out) + ADP + phosphate + H(+)</text>
        <dbReference type="Rhea" id="RHEA:11348"/>
        <dbReference type="ChEBI" id="CHEBI:15377"/>
        <dbReference type="ChEBI" id="CHEBI:15378"/>
        <dbReference type="ChEBI" id="CHEBI:29242"/>
        <dbReference type="ChEBI" id="CHEBI:30616"/>
        <dbReference type="ChEBI" id="CHEBI:43474"/>
        <dbReference type="ChEBI" id="CHEBI:456216"/>
        <dbReference type="EC" id="7.3.2.7"/>
    </reaction>
</comment>
<comment type="similarity">
    <text evidence="3">Belongs to the arsA ATPase family.</text>
</comment>
<keyword id="KW-0059">Arsenical resistance</keyword>
<keyword id="KW-0067">ATP-binding</keyword>
<keyword id="KW-0547">Nucleotide-binding</keyword>
<keyword id="KW-1185">Reference proteome</keyword>
<keyword id="KW-1278">Translocase</keyword>
<name>ARSA1_AQUAE</name>
<evidence type="ECO:0000250" key="1"/>
<evidence type="ECO:0000255" key="2"/>
<evidence type="ECO:0000305" key="3"/>
<organism>
    <name type="scientific">Aquifex aeolicus (strain VF5)</name>
    <dbReference type="NCBI Taxonomy" id="224324"/>
    <lineage>
        <taxon>Bacteria</taxon>
        <taxon>Pseudomonadati</taxon>
        <taxon>Aquificota</taxon>
        <taxon>Aquificia</taxon>
        <taxon>Aquificales</taxon>
        <taxon>Aquificaceae</taxon>
        <taxon>Aquifex</taxon>
    </lineage>
</organism>
<dbReference type="EC" id="7.3.2.7"/>
<dbReference type="EMBL" id="AE000657">
    <property type="protein sequence ID" value="AAC06864.1"/>
    <property type="molecule type" value="Genomic_DNA"/>
</dbReference>
<dbReference type="PIR" id="H70359">
    <property type="entry name" value="H70359"/>
</dbReference>
<dbReference type="RefSeq" id="NP_213468.1">
    <property type="nucleotide sequence ID" value="NC_000918.1"/>
</dbReference>
<dbReference type="RefSeq" id="WP_010880406.1">
    <property type="nucleotide sequence ID" value="NC_000918.1"/>
</dbReference>
<dbReference type="SMR" id="O66908"/>
<dbReference type="STRING" id="224324.aq_682"/>
<dbReference type="EnsemblBacteria" id="AAC06864">
    <property type="protein sequence ID" value="AAC06864"/>
    <property type="gene ID" value="aq_682"/>
</dbReference>
<dbReference type="KEGG" id="aae:aq_682"/>
<dbReference type="PATRIC" id="fig|224324.8.peg.550"/>
<dbReference type="eggNOG" id="COG0003">
    <property type="taxonomic scope" value="Bacteria"/>
</dbReference>
<dbReference type="HOGENOM" id="CLU_040761_1_0_0"/>
<dbReference type="InParanoid" id="O66908"/>
<dbReference type="OrthoDB" id="9780677at2"/>
<dbReference type="Proteomes" id="UP000000798">
    <property type="component" value="Chromosome"/>
</dbReference>
<dbReference type="GO" id="GO:0005524">
    <property type="term" value="F:ATP binding"/>
    <property type="evidence" value="ECO:0007669"/>
    <property type="project" value="UniProtKB-KW"/>
</dbReference>
<dbReference type="GO" id="GO:0016887">
    <property type="term" value="F:ATP hydrolysis activity"/>
    <property type="evidence" value="ECO:0000318"/>
    <property type="project" value="GO_Central"/>
</dbReference>
<dbReference type="GO" id="GO:0015446">
    <property type="term" value="F:ATPase-coupled arsenite transmembrane transporter activity"/>
    <property type="evidence" value="ECO:0007669"/>
    <property type="project" value="UniProtKB-EC"/>
</dbReference>
<dbReference type="CDD" id="cd02035">
    <property type="entry name" value="ArsA"/>
    <property type="match status" value="1"/>
</dbReference>
<dbReference type="FunFam" id="3.40.50.300:FF:001801">
    <property type="entry name" value="Putative arsenical pump-driving ATPase"/>
    <property type="match status" value="1"/>
</dbReference>
<dbReference type="Gene3D" id="2.60.40.790">
    <property type="match status" value="1"/>
</dbReference>
<dbReference type="Gene3D" id="3.40.50.300">
    <property type="entry name" value="P-loop containing nucleotide triphosphate hydrolases"/>
    <property type="match status" value="1"/>
</dbReference>
<dbReference type="InterPro" id="IPR025723">
    <property type="entry name" value="Anion-transp_ATPase-like_dom"/>
</dbReference>
<dbReference type="InterPro" id="IPR040612">
    <property type="entry name" value="ArsA_HSP20-like"/>
</dbReference>
<dbReference type="InterPro" id="IPR016300">
    <property type="entry name" value="ATPase_ArsA/GET3"/>
</dbReference>
<dbReference type="InterPro" id="IPR008978">
    <property type="entry name" value="HSP20-like_chaperone"/>
</dbReference>
<dbReference type="InterPro" id="IPR027417">
    <property type="entry name" value="P-loop_NTPase"/>
</dbReference>
<dbReference type="NCBIfam" id="TIGR00345">
    <property type="entry name" value="GET3_arsA_TRC40"/>
    <property type="match status" value="1"/>
</dbReference>
<dbReference type="PANTHER" id="PTHR10803">
    <property type="entry name" value="ARSENICAL PUMP-DRIVING ATPASE ARSENITE-TRANSLOCATING ATPASE"/>
    <property type="match status" value="1"/>
</dbReference>
<dbReference type="PANTHER" id="PTHR10803:SF3">
    <property type="entry name" value="ATPASE GET3"/>
    <property type="match status" value="1"/>
</dbReference>
<dbReference type="Pfam" id="PF02374">
    <property type="entry name" value="ArsA_ATPase"/>
    <property type="match status" value="1"/>
</dbReference>
<dbReference type="Pfam" id="PF17886">
    <property type="entry name" value="ArsA_HSP20"/>
    <property type="match status" value="1"/>
</dbReference>
<dbReference type="SUPFAM" id="SSF52540">
    <property type="entry name" value="P-loop containing nucleoside triphosphate hydrolases"/>
    <property type="match status" value="1"/>
</dbReference>
<sequence>MRIILFSGKGGVGKTTISAATGYKLSQLGKKVIVVSLDPAHSLADSFDVPEEERRKAKGLPIKINENLEIQEIDIQEEIERYWGEVYRFIELLFHTTGLHEILADELAILPGMEEITSLLYVNKYYREGNHDVLILDLPPTGESIRFVSMPTVMKWYMKKIFKTERLIMKVARPTVGRMTDVPLPDEEYFKALETFYERLKGVDEILINPDITSIRIVSNPEKMVLKESQRAFLYFLLFGVNVDAVIVNKVIPEEVIQQENCSFLEKWLNIQKKYVKEIESYFSPVPVFKVPLLEEEVVGLERLEKLAQLIYGDEPPDKIFHKEIPYKIEQLDGKYVIRIKAPGVKKESISLVKGEDEIVVRVGNFKAHVMLPRKLRNLEPERAKVEKDEILIFMS</sequence>
<gene>
    <name type="primary">arsA1</name>
    <name type="ordered locus">aq_682</name>
</gene>
<proteinExistence type="inferred from homology"/>